<evidence type="ECO:0000255" key="1">
    <source>
        <dbReference type="HAMAP-Rule" id="MF_01307"/>
    </source>
</evidence>
<evidence type="ECO:0000305" key="2"/>
<reference key="1">
    <citation type="journal article" date="2010" name="BMC Genomics">
        <title>A genomic perspective on the potential of Actinobacillus succinogenes for industrial succinate production.</title>
        <authorList>
            <person name="McKinlay J.B."/>
            <person name="Laivenieks M."/>
            <person name="Schindler B.D."/>
            <person name="McKinlay A.A."/>
            <person name="Siddaramappa S."/>
            <person name="Challacombe J.F."/>
            <person name="Lowry S.R."/>
            <person name="Clum A."/>
            <person name="Lapidus A.L."/>
            <person name="Burkhart K.B."/>
            <person name="Harkins V."/>
            <person name="Vieille C."/>
        </authorList>
    </citation>
    <scope>NUCLEOTIDE SEQUENCE [LARGE SCALE GENOMIC DNA]</scope>
    <source>
        <strain>ATCC 55618 / DSM 22257 / CCUG 43843 / 130Z</strain>
    </source>
</reference>
<dbReference type="EMBL" id="CP000746">
    <property type="protein sequence ID" value="ABR73852.1"/>
    <property type="molecule type" value="Genomic_DNA"/>
</dbReference>
<dbReference type="RefSeq" id="WP_012072233.1">
    <property type="nucleotide sequence ID" value="NC_009655.1"/>
</dbReference>
<dbReference type="SMR" id="A6VLK5"/>
<dbReference type="STRING" id="339671.Asuc_0476"/>
<dbReference type="KEGG" id="asu:Asuc_0476"/>
<dbReference type="eggNOG" id="COG0098">
    <property type="taxonomic scope" value="Bacteria"/>
</dbReference>
<dbReference type="HOGENOM" id="CLU_065898_2_2_6"/>
<dbReference type="OrthoDB" id="9809045at2"/>
<dbReference type="Proteomes" id="UP000001114">
    <property type="component" value="Chromosome"/>
</dbReference>
<dbReference type="GO" id="GO:0015935">
    <property type="term" value="C:small ribosomal subunit"/>
    <property type="evidence" value="ECO:0007669"/>
    <property type="project" value="InterPro"/>
</dbReference>
<dbReference type="GO" id="GO:0019843">
    <property type="term" value="F:rRNA binding"/>
    <property type="evidence" value="ECO:0007669"/>
    <property type="project" value="UniProtKB-UniRule"/>
</dbReference>
<dbReference type="GO" id="GO:0003735">
    <property type="term" value="F:structural constituent of ribosome"/>
    <property type="evidence" value="ECO:0007669"/>
    <property type="project" value="InterPro"/>
</dbReference>
<dbReference type="GO" id="GO:0006412">
    <property type="term" value="P:translation"/>
    <property type="evidence" value="ECO:0007669"/>
    <property type="project" value="UniProtKB-UniRule"/>
</dbReference>
<dbReference type="FunFam" id="3.30.160.20:FF:000001">
    <property type="entry name" value="30S ribosomal protein S5"/>
    <property type="match status" value="1"/>
</dbReference>
<dbReference type="FunFam" id="3.30.230.10:FF:000002">
    <property type="entry name" value="30S ribosomal protein S5"/>
    <property type="match status" value="1"/>
</dbReference>
<dbReference type="Gene3D" id="3.30.160.20">
    <property type="match status" value="1"/>
</dbReference>
<dbReference type="Gene3D" id="3.30.230.10">
    <property type="match status" value="1"/>
</dbReference>
<dbReference type="HAMAP" id="MF_01307_B">
    <property type="entry name" value="Ribosomal_uS5_B"/>
    <property type="match status" value="1"/>
</dbReference>
<dbReference type="InterPro" id="IPR020568">
    <property type="entry name" value="Ribosomal_Su5_D2-typ_SF"/>
</dbReference>
<dbReference type="InterPro" id="IPR000851">
    <property type="entry name" value="Ribosomal_uS5"/>
</dbReference>
<dbReference type="InterPro" id="IPR005712">
    <property type="entry name" value="Ribosomal_uS5_bac-type"/>
</dbReference>
<dbReference type="InterPro" id="IPR005324">
    <property type="entry name" value="Ribosomal_uS5_C"/>
</dbReference>
<dbReference type="InterPro" id="IPR013810">
    <property type="entry name" value="Ribosomal_uS5_N"/>
</dbReference>
<dbReference type="InterPro" id="IPR018192">
    <property type="entry name" value="Ribosomal_uS5_N_CS"/>
</dbReference>
<dbReference type="InterPro" id="IPR014721">
    <property type="entry name" value="Ribsml_uS5_D2-typ_fold_subgr"/>
</dbReference>
<dbReference type="NCBIfam" id="TIGR01021">
    <property type="entry name" value="rpsE_bact"/>
    <property type="match status" value="1"/>
</dbReference>
<dbReference type="PANTHER" id="PTHR48277">
    <property type="entry name" value="MITOCHONDRIAL RIBOSOMAL PROTEIN S5"/>
    <property type="match status" value="1"/>
</dbReference>
<dbReference type="PANTHER" id="PTHR48277:SF1">
    <property type="entry name" value="MITOCHONDRIAL RIBOSOMAL PROTEIN S5"/>
    <property type="match status" value="1"/>
</dbReference>
<dbReference type="Pfam" id="PF00333">
    <property type="entry name" value="Ribosomal_S5"/>
    <property type="match status" value="1"/>
</dbReference>
<dbReference type="Pfam" id="PF03719">
    <property type="entry name" value="Ribosomal_S5_C"/>
    <property type="match status" value="1"/>
</dbReference>
<dbReference type="SUPFAM" id="SSF54768">
    <property type="entry name" value="dsRNA-binding domain-like"/>
    <property type="match status" value="1"/>
</dbReference>
<dbReference type="SUPFAM" id="SSF54211">
    <property type="entry name" value="Ribosomal protein S5 domain 2-like"/>
    <property type="match status" value="1"/>
</dbReference>
<dbReference type="PROSITE" id="PS00585">
    <property type="entry name" value="RIBOSOMAL_S5"/>
    <property type="match status" value="1"/>
</dbReference>
<dbReference type="PROSITE" id="PS50881">
    <property type="entry name" value="S5_DSRBD"/>
    <property type="match status" value="1"/>
</dbReference>
<feature type="chain" id="PRO_0000323055" description="Small ribosomal subunit protein uS5">
    <location>
        <begin position="1"/>
        <end position="166"/>
    </location>
</feature>
<feature type="domain" description="S5 DRBM" evidence="1">
    <location>
        <begin position="11"/>
        <end position="74"/>
    </location>
</feature>
<organism>
    <name type="scientific">Actinobacillus succinogenes (strain ATCC 55618 / DSM 22257 / CCUG 43843 / 130Z)</name>
    <dbReference type="NCBI Taxonomy" id="339671"/>
    <lineage>
        <taxon>Bacteria</taxon>
        <taxon>Pseudomonadati</taxon>
        <taxon>Pseudomonadota</taxon>
        <taxon>Gammaproteobacteria</taxon>
        <taxon>Pasteurellales</taxon>
        <taxon>Pasteurellaceae</taxon>
        <taxon>Actinobacillus</taxon>
    </lineage>
</organism>
<proteinExistence type="inferred from homology"/>
<protein>
    <recommendedName>
        <fullName evidence="1">Small ribosomal subunit protein uS5</fullName>
    </recommendedName>
    <alternativeName>
        <fullName evidence="2">30S ribosomal protein S5</fullName>
    </alternativeName>
</protein>
<comment type="function">
    <text evidence="1">With S4 and S12 plays an important role in translational accuracy.</text>
</comment>
<comment type="function">
    <text evidence="1">Located at the back of the 30S subunit body where it stabilizes the conformation of the head with respect to the body.</text>
</comment>
<comment type="subunit">
    <text evidence="1">Part of the 30S ribosomal subunit. Contacts proteins S4 and S8.</text>
</comment>
<comment type="domain">
    <text>The N-terminal domain interacts with the head of the 30S subunit; the C-terminal domain interacts with the body and contacts protein S4. The interaction surface between S4 and S5 is involved in control of translational fidelity.</text>
</comment>
<comment type="similarity">
    <text evidence="1">Belongs to the universal ribosomal protein uS5 family.</text>
</comment>
<keyword id="KW-1185">Reference proteome</keyword>
<keyword id="KW-0687">Ribonucleoprotein</keyword>
<keyword id="KW-0689">Ribosomal protein</keyword>
<keyword id="KW-0694">RNA-binding</keyword>
<keyword id="KW-0699">rRNA-binding</keyword>
<sequence>MSNIEKQTGELQEKLIAVNRVSKTVKGGRIMSFTALTVVGDGNGRVGFGYGKAREVPAAIQKAMEKARRNMINVALNDGTLQHPVKGVHTGSRVFMQPASEGTGIIAGGAMRAVLEVAGVRNVLSKAYGSTNPINVVRATIDALANMKSPETVAAKRGKTVDEILG</sequence>
<name>RS5_ACTSZ</name>
<gene>
    <name evidence="1" type="primary">rpsE</name>
    <name type="ordered locus">Asuc_0476</name>
</gene>
<accession>A6VLK5</accession>